<accession>Q6BIN3</accession>
<comment type="function">
    <text evidence="1">Negative regulator of the mitotic exit network (MEN), required for multiple cell cycle checkpoints. Required for daughter cell separation and chromosome stability. Involved in copper sensitivity.</text>
</comment>
<comment type="subcellular location">
    <subcellularLocation>
        <location evidence="2">Cytoplasm</location>
    </subcellularLocation>
    <subcellularLocation>
        <location evidence="2">Nucleus</location>
    </subcellularLocation>
</comment>
<comment type="similarity">
    <text evidence="4">Belongs to the AMN1 family.</text>
</comment>
<sequence>MNITPVSKNTTEPLACIENIDNHIYDYSPSNEEPKYLKRSKSESTTKLSRQLPRTPSNKYHARNKRRPYSTTPPISLNIPSSPFIHSEFSLNSSSSESSDLESLPDLSEDRDTPFSSPINRNPLTPNNSFFSFTKKNGPIECLLPKRTQISIFEIPEIVYKIVEFADIQNTAVPQEGTPIRRKPLSSNHALLIYGDKKQAELSLQDHYDEHNNDGMLFNCLQVNKLFNQVTTEIISQKFFFSDEMKLHSFLQNLKITQIKSKPSLFVFHKLFHAKQDIIELIKSHMDFSNLQWLEFYMCPKLLPTPEFLSCGTKIKKIVITGSKVIDDGFLSMVAKKCPNLEVLDIRACELISDSGIYQIAKRCTKLTTVNFGRKNKGNLITDSSICILIRNNPNLKTVGLAGCHITDKTLWDLAIRCSDHLQRLSLNNCPHITNQSIPLILHSNLFKNISVLELRFANQITNFKPIIEFKRRQEFRGISILIEVCESLCLMMREQELEMDKVISQRIFEDISYWANDNNDGDVPYQSFINSRRHK</sequence>
<evidence type="ECO:0000250" key="1"/>
<evidence type="ECO:0000250" key="2">
    <source>
        <dbReference type="UniProtKB" id="P38285"/>
    </source>
</evidence>
<evidence type="ECO:0000256" key="3">
    <source>
        <dbReference type="SAM" id="MobiDB-lite"/>
    </source>
</evidence>
<evidence type="ECO:0000305" key="4"/>
<feature type="chain" id="PRO_0000277844" description="Antagonist of mitotic exit network protein 1">
    <location>
        <begin position="1"/>
        <end position="536"/>
    </location>
</feature>
<feature type="region of interest" description="Disordered" evidence="3">
    <location>
        <begin position="27"/>
        <end position="77"/>
    </location>
</feature>
<feature type="region of interest" description="Disordered" evidence="3">
    <location>
        <begin position="94"/>
        <end position="123"/>
    </location>
</feature>
<feature type="compositionally biased region" description="Basic and acidic residues" evidence="3">
    <location>
        <begin position="32"/>
        <end position="44"/>
    </location>
</feature>
<feature type="compositionally biased region" description="Polar residues" evidence="3">
    <location>
        <begin position="45"/>
        <end position="58"/>
    </location>
</feature>
<feature type="compositionally biased region" description="Low complexity" evidence="3">
    <location>
        <begin position="94"/>
        <end position="106"/>
    </location>
</feature>
<feature type="compositionally biased region" description="Polar residues" evidence="3">
    <location>
        <begin position="114"/>
        <end position="123"/>
    </location>
</feature>
<name>AMN1_DEBHA</name>
<keyword id="KW-0131">Cell cycle</keyword>
<keyword id="KW-0132">Cell division</keyword>
<keyword id="KW-0963">Cytoplasm</keyword>
<keyword id="KW-0498">Mitosis</keyword>
<keyword id="KW-0539">Nucleus</keyword>
<keyword id="KW-1185">Reference proteome</keyword>
<gene>
    <name type="primary">AMN1</name>
    <name type="ordered locus">DEHA2G08998g</name>
</gene>
<dbReference type="EMBL" id="CR382139">
    <property type="protein sequence ID" value="CAG90406.2"/>
    <property type="molecule type" value="Genomic_DNA"/>
</dbReference>
<dbReference type="RefSeq" id="XP_461938.2">
    <property type="nucleotide sequence ID" value="XM_461938.1"/>
</dbReference>
<dbReference type="SMR" id="Q6BIN3"/>
<dbReference type="FunCoup" id="Q6BIN3">
    <property type="interactions" value="123"/>
</dbReference>
<dbReference type="STRING" id="284592.Q6BIN3"/>
<dbReference type="GeneID" id="2904827"/>
<dbReference type="KEGG" id="dha:DEHA2G08998g"/>
<dbReference type="eggNOG" id="KOG1947">
    <property type="taxonomic scope" value="Eukaryota"/>
</dbReference>
<dbReference type="HOGENOM" id="CLU_031725_0_0_1"/>
<dbReference type="InParanoid" id="Q6BIN3"/>
<dbReference type="OMA" id="IGLAGCH"/>
<dbReference type="OrthoDB" id="550575at2759"/>
<dbReference type="Proteomes" id="UP000000599">
    <property type="component" value="Chromosome G"/>
</dbReference>
<dbReference type="GO" id="GO:0005737">
    <property type="term" value="C:cytoplasm"/>
    <property type="evidence" value="ECO:0007669"/>
    <property type="project" value="UniProtKB-SubCell"/>
</dbReference>
<dbReference type="GO" id="GO:0005634">
    <property type="term" value="C:nucleus"/>
    <property type="evidence" value="ECO:0007669"/>
    <property type="project" value="UniProtKB-SubCell"/>
</dbReference>
<dbReference type="GO" id="GO:0019005">
    <property type="term" value="C:SCF ubiquitin ligase complex"/>
    <property type="evidence" value="ECO:0007669"/>
    <property type="project" value="TreeGrafter"/>
</dbReference>
<dbReference type="GO" id="GO:0051301">
    <property type="term" value="P:cell division"/>
    <property type="evidence" value="ECO:0007669"/>
    <property type="project" value="UniProtKB-KW"/>
</dbReference>
<dbReference type="GO" id="GO:0031146">
    <property type="term" value="P:SCF-dependent proteasomal ubiquitin-dependent protein catabolic process"/>
    <property type="evidence" value="ECO:0007669"/>
    <property type="project" value="TreeGrafter"/>
</dbReference>
<dbReference type="CDD" id="cd09293">
    <property type="entry name" value="AMN1"/>
    <property type="match status" value="1"/>
</dbReference>
<dbReference type="Gene3D" id="3.80.10.10">
    <property type="entry name" value="Ribonuclease Inhibitor"/>
    <property type="match status" value="1"/>
</dbReference>
<dbReference type="InterPro" id="IPR001611">
    <property type="entry name" value="Leu-rich_rpt"/>
</dbReference>
<dbReference type="InterPro" id="IPR006553">
    <property type="entry name" value="Leu-rich_rpt_Cys-con_subtyp"/>
</dbReference>
<dbReference type="InterPro" id="IPR032675">
    <property type="entry name" value="LRR_dom_sf"/>
</dbReference>
<dbReference type="PANTHER" id="PTHR13318:SF95">
    <property type="entry name" value="F-BOX PROTEIN YLR352W"/>
    <property type="match status" value="1"/>
</dbReference>
<dbReference type="PANTHER" id="PTHR13318">
    <property type="entry name" value="PARTNER OF PAIRED, ISOFORM B-RELATED"/>
    <property type="match status" value="1"/>
</dbReference>
<dbReference type="Pfam" id="PF13516">
    <property type="entry name" value="LRR_6"/>
    <property type="match status" value="1"/>
</dbReference>
<dbReference type="SMART" id="SM00367">
    <property type="entry name" value="LRR_CC"/>
    <property type="match status" value="4"/>
</dbReference>
<dbReference type="SUPFAM" id="SSF52047">
    <property type="entry name" value="RNI-like"/>
    <property type="match status" value="1"/>
</dbReference>
<protein>
    <recommendedName>
        <fullName>Antagonist of mitotic exit network protein 1</fullName>
    </recommendedName>
</protein>
<organism>
    <name type="scientific">Debaryomyces hansenii (strain ATCC 36239 / CBS 767 / BCRC 21394 / JCM 1990 / NBRC 0083 / IGC 2968)</name>
    <name type="common">Yeast</name>
    <name type="synonym">Torulaspora hansenii</name>
    <dbReference type="NCBI Taxonomy" id="284592"/>
    <lineage>
        <taxon>Eukaryota</taxon>
        <taxon>Fungi</taxon>
        <taxon>Dikarya</taxon>
        <taxon>Ascomycota</taxon>
        <taxon>Saccharomycotina</taxon>
        <taxon>Pichiomycetes</taxon>
        <taxon>Debaryomycetaceae</taxon>
        <taxon>Debaryomyces</taxon>
    </lineage>
</organism>
<reference key="1">
    <citation type="journal article" date="2004" name="Nature">
        <title>Genome evolution in yeasts.</title>
        <authorList>
            <person name="Dujon B."/>
            <person name="Sherman D."/>
            <person name="Fischer G."/>
            <person name="Durrens P."/>
            <person name="Casaregola S."/>
            <person name="Lafontaine I."/>
            <person name="de Montigny J."/>
            <person name="Marck C."/>
            <person name="Neuveglise C."/>
            <person name="Talla E."/>
            <person name="Goffard N."/>
            <person name="Frangeul L."/>
            <person name="Aigle M."/>
            <person name="Anthouard V."/>
            <person name="Babour A."/>
            <person name="Barbe V."/>
            <person name="Barnay S."/>
            <person name="Blanchin S."/>
            <person name="Beckerich J.-M."/>
            <person name="Beyne E."/>
            <person name="Bleykasten C."/>
            <person name="Boisrame A."/>
            <person name="Boyer J."/>
            <person name="Cattolico L."/>
            <person name="Confanioleri F."/>
            <person name="de Daruvar A."/>
            <person name="Despons L."/>
            <person name="Fabre E."/>
            <person name="Fairhead C."/>
            <person name="Ferry-Dumazet H."/>
            <person name="Groppi A."/>
            <person name="Hantraye F."/>
            <person name="Hennequin C."/>
            <person name="Jauniaux N."/>
            <person name="Joyet P."/>
            <person name="Kachouri R."/>
            <person name="Kerrest A."/>
            <person name="Koszul R."/>
            <person name="Lemaire M."/>
            <person name="Lesur I."/>
            <person name="Ma L."/>
            <person name="Muller H."/>
            <person name="Nicaud J.-M."/>
            <person name="Nikolski M."/>
            <person name="Oztas S."/>
            <person name="Ozier-Kalogeropoulos O."/>
            <person name="Pellenz S."/>
            <person name="Potier S."/>
            <person name="Richard G.-F."/>
            <person name="Straub M.-L."/>
            <person name="Suleau A."/>
            <person name="Swennen D."/>
            <person name="Tekaia F."/>
            <person name="Wesolowski-Louvel M."/>
            <person name="Westhof E."/>
            <person name="Wirth B."/>
            <person name="Zeniou-Meyer M."/>
            <person name="Zivanovic Y."/>
            <person name="Bolotin-Fukuhara M."/>
            <person name="Thierry A."/>
            <person name="Bouchier C."/>
            <person name="Caudron B."/>
            <person name="Scarpelli C."/>
            <person name="Gaillardin C."/>
            <person name="Weissenbach J."/>
            <person name="Wincker P."/>
            <person name="Souciet J.-L."/>
        </authorList>
    </citation>
    <scope>NUCLEOTIDE SEQUENCE [LARGE SCALE GENOMIC DNA]</scope>
    <source>
        <strain>ATCC 36239 / CBS 767 / BCRC 21394 / JCM 1990 / NBRC 0083 / IGC 2968</strain>
    </source>
</reference>
<proteinExistence type="inferred from homology"/>